<keyword id="KW-0002">3D-structure</keyword>
<keyword id="KW-1015">Disulfide bond</keyword>
<keyword id="KW-0325">Glycoprotein</keyword>
<keyword id="KW-0336">GPI-anchor</keyword>
<keyword id="KW-0449">Lipoprotein</keyword>
<keyword id="KW-0472">Membrane</keyword>
<keyword id="KW-1267">Proteomics identification</keyword>
<keyword id="KW-1185">Reference proteome</keyword>
<keyword id="KW-0732">Signal</keyword>
<comment type="function">
    <text evidence="5">Lacks dipeptidase activity and is unable to hydrolyze cystinyl-bis-glycine, leukotriene D4 and the beta-lactam antibiotic imipenem (PubMed:32325220). The absence of activity may be due to the inability of asparagine (instead of aspartate found in DPEP1/2) at position 359 to function as the acid/base catalyst and activate the nucleophilic water/hydroxide (PubMed:32325220). A tyrosine (instead of histidine) at position 269 reduces affinity for the beta zinc and may cause substrate steric hindrance (PubMed:32325220).</text>
</comment>
<comment type="subunit">
    <text evidence="2 4 5">Homodimer; disulfide-linked (PubMed:32325220). Interacts with TEX101; co-localized on the cell surface of spermatocytes, spermatids, and testicular spermatozoa, co-localized only in cytoplasmic droplets of caput and corpus epididymal sperm (By similarity).</text>
</comment>
<comment type="subcellular location">
    <subcellularLocation>
        <location evidence="2">Membrane</location>
        <topology evidence="2">Lipid-anchor</topology>
        <topology evidence="2">GPI-anchor</topology>
    </subcellularLocation>
</comment>
<comment type="similarity">
    <text evidence="4">Belongs to the metallo-dependent hydrolases superfamily. Peptidase M19 family.</text>
</comment>
<comment type="sequence caution" evidence="6">
    <conflict type="erroneous initiation">
        <sequence resource="EMBL-CDS" id="AAH57789"/>
    </conflict>
    <text>Extended N-terminus.</text>
</comment>
<comment type="sequence caution" evidence="6">
    <conflict type="erroneous initiation">
        <sequence resource="EMBL-CDS" id="BAG51910"/>
    </conflict>
    <text>Extended N-terminus.</text>
</comment>
<comment type="sequence caution" evidence="6">
    <conflict type="erroneous initiation">
        <sequence resource="EMBL-CDS" id="CAC15385"/>
    </conflict>
    <text>Extended N-terminus.</text>
</comment>
<comment type="sequence caution" evidence="6">
    <conflict type="erroneous gene model prediction">
        <sequence resource="EMBL-CDS" id="EAW83198"/>
    </conflict>
</comment>
<organism>
    <name type="scientific">Homo sapiens</name>
    <name type="common">Human</name>
    <dbReference type="NCBI Taxonomy" id="9606"/>
    <lineage>
        <taxon>Eukaryota</taxon>
        <taxon>Metazoa</taxon>
        <taxon>Chordata</taxon>
        <taxon>Craniata</taxon>
        <taxon>Vertebrata</taxon>
        <taxon>Euteleostomi</taxon>
        <taxon>Mammalia</taxon>
        <taxon>Eutheria</taxon>
        <taxon>Euarchontoglires</taxon>
        <taxon>Primates</taxon>
        <taxon>Haplorrhini</taxon>
        <taxon>Catarrhini</taxon>
        <taxon>Hominidae</taxon>
        <taxon>Homo</taxon>
    </lineage>
</organism>
<gene>
    <name type="primary">DPEP3</name>
    <name type="ORF">UNQ834/PRO1772</name>
</gene>
<accession>Q9H4B8</accession>
<accession>B3KQ48</accession>
<accession>Q6PEZ5</accession>
<accession>Q6UXE4</accession>
<reference key="1">
    <citation type="submission" date="2000-11" db="EMBL/GenBank/DDBJ databases">
        <title>Cloning and sequencing of a second human homologue of renal membrane dipeptidase.</title>
        <authorList>
            <person name="Chen J.M."/>
            <person name="Fortunato M."/>
            <person name="Barrett A.J."/>
        </authorList>
    </citation>
    <scope>NUCLEOTIDE SEQUENCE [MRNA]</scope>
    <source>
        <tissue>Testis</tissue>
    </source>
</reference>
<reference key="2">
    <citation type="journal article" date="2003" name="Genome Res.">
        <title>The secreted protein discovery initiative (SPDI), a large-scale effort to identify novel human secreted and transmembrane proteins: a bioinformatics assessment.</title>
        <authorList>
            <person name="Clark H.F."/>
            <person name="Gurney A.L."/>
            <person name="Abaya E."/>
            <person name="Baker K."/>
            <person name="Baldwin D.T."/>
            <person name="Brush J."/>
            <person name="Chen J."/>
            <person name="Chow B."/>
            <person name="Chui C."/>
            <person name="Crowley C."/>
            <person name="Currell B."/>
            <person name="Deuel B."/>
            <person name="Dowd P."/>
            <person name="Eaton D."/>
            <person name="Foster J.S."/>
            <person name="Grimaldi C."/>
            <person name="Gu Q."/>
            <person name="Hass P.E."/>
            <person name="Heldens S."/>
            <person name="Huang A."/>
            <person name="Kim H.S."/>
            <person name="Klimowski L."/>
            <person name="Jin Y."/>
            <person name="Johnson S."/>
            <person name="Lee J."/>
            <person name="Lewis L."/>
            <person name="Liao D."/>
            <person name="Mark M.R."/>
            <person name="Robbie E."/>
            <person name="Sanchez C."/>
            <person name="Schoenfeld J."/>
            <person name="Seshagiri S."/>
            <person name="Simmons L."/>
            <person name="Singh J."/>
            <person name="Smith V."/>
            <person name="Stinson J."/>
            <person name="Vagts A."/>
            <person name="Vandlen R.L."/>
            <person name="Watanabe C."/>
            <person name="Wieand D."/>
            <person name="Woods K."/>
            <person name="Xie M.-H."/>
            <person name="Yansura D.G."/>
            <person name="Yi S."/>
            <person name="Yu G."/>
            <person name="Yuan J."/>
            <person name="Zhang M."/>
            <person name="Zhang Z."/>
            <person name="Goddard A.D."/>
            <person name="Wood W.I."/>
            <person name="Godowski P.J."/>
            <person name="Gray A.M."/>
        </authorList>
    </citation>
    <scope>NUCLEOTIDE SEQUENCE [LARGE SCALE MRNA]</scope>
</reference>
<reference key="3">
    <citation type="journal article" date="2004" name="Nat. Genet.">
        <title>Complete sequencing and characterization of 21,243 full-length human cDNAs.</title>
        <authorList>
            <person name="Ota T."/>
            <person name="Suzuki Y."/>
            <person name="Nishikawa T."/>
            <person name="Otsuki T."/>
            <person name="Sugiyama T."/>
            <person name="Irie R."/>
            <person name="Wakamatsu A."/>
            <person name="Hayashi K."/>
            <person name="Sato H."/>
            <person name="Nagai K."/>
            <person name="Kimura K."/>
            <person name="Makita H."/>
            <person name="Sekine M."/>
            <person name="Obayashi M."/>
            <person name="Nishi T."/>
            <person name="Shibahara T."/>
            <person name="Tanaka T."/>
            <person name="Ishii S."/>
            <person name="Yamamoto J."/>
            <person name="Saito K."/>
            <person name="Kawai Y."/>
            <person name="Isono Y."/>
            <person name="Nakamura Y."/>
            <person name="Nagahari K."/>
            <person name="Murakami K."/>
            <person name="Yasuda T."/>
            <person name="Iwayanagi T."/>
            <person name="Wagatsuma M."/>
            <person name="Shiratori A."/>
            <person name="Sudo H."/>
            <person name="Hosoiri T."/>
            <person name="Kaku Y."/>
            <person name="Kodaira H."/>
            <person name="Kondo H."/>
            <person name="Sugawara M."/>
            <person name="Takahashi M."/>
            <person name="Kanda K."/>
            <person name="Yokoi T."/>
            <person name="Furuya T."/>
            <person name="Kikkawa E."/>
            <person name="Omura Y."/>
            <person name="Abe K."/>
            <person name="Kamihara K."/>
            <person name="Katsuta N."/>
            <person name="Sato K."/>
            <person name="Tanikawa M."/>
            <person name="Yamazaki M."/>
            <person name="Ninomiya K."/>
            <person name="Ishibashi T."/>
            <person name="Yamashita H."/>
            <person name="Murakawa K."/>
            <person name="Fujimori K."/>
            <person name="Tanai H."/>
            <person name="Kimata M."/>
            <person name="Watanabe M."/>
            <person name="Hiraoka S."/>
            <person name="Chiba Y."/>
            <person name="Ishida S."/>
            <person name="Ono Y."/>
            <person name="Takiguchi S."/>
            <person name="Watanabe S."/>
            <person name="Yosida M."/>
            <person name="Hotuta T."/>
            <person name="Kusano J."/>
            <person name="Kanehori K."/>
            <person name="Takahashi-Fujii A."/>
            <person name="Hara H."/>
            <person name="Tanase T.-O."/>
            <person name="Nomura Y."/>
            <person name="Togiya S."/>
            <person name="Komai F."/>
            <person name="Hara R."/>
            <person name="Takeuchi K."/>
            <person name="Arita M."/>
            <person name="Imose N."/>
            <person name="Musashino K."/>
            <person name="Yuuki H."/>
            <person name="Oshima A."/>
            <person name="Sasaki N."/>
            <person name="Aotsuka S."/>
            <person name="Yoshikawa Y."/>
            <person name="Matsunawa H."/>
            <person name="Ichihara T."/>
            <person name="Shiohata N."/>
            <person name="Sano S."/>
            <person name="Moriya S."/>
            <person name="Momiyama H."/>
            <person name="Satoh N."/>
            <person name="Takami S."/>
            <person name="Terashima Y."/>
            <person name="Suzuki O."/>
            <person name="Nakagawa S."/>
            <person name="Senoh A."/>
            <person name="Mizoguchi H."/>
            <person name="Goto Y."/>
            <person name="Shimizu F."/>
            <person name="Wakebe H."/>
            <person name="Hishigaki H."/>
            <person name="Watanabe T."/>
            <person name="Sugiyama A."/>
            <person name="Takemoto M."/>
            <person name="Kawakami B."/>
            <person name="Yamazaki M."/>
            <person name="Watanabe K."/>
            <person name="Kumagai A."/>
            <person name="Itakura S."/>
            <person name="Fukuzumi Y."/>
            <person name="Fujimori Y."/>
            <person name="Komiyama M."/>
            <person name="Tashiro H."/>
            <person name="Tanigami A."/>
            <person name="Fujiwara T."/>
            <person name="Ono T."/>
            <person name="Yamada K."/>
            <person name="Fujii Y."/>
            <person name="Ozaki K."/>
            <person name="Hirao M."/>
            <person name="Ohmori Y."/>
            <person name="Kawabata A."/>
            <person name="Hikiji T."/>
            <person name="Kobatake N."/>
            <person name="Inagaki H."/>
            <person name="Ikema Y."/>
            <person name="Okamoto S."/>
            <person name="Okitani R."/>
            <person name="Kawakami T."/>
            <person name="Noguchi S."/>
            <person name="Itoh T."/>
            <person name="Shigeta K."/>
            <person name="Senba T."/>
            <person name="Matsumura K."/>
            <person name="Nakajima Y."/>
            <person name="Mizuno T."/>
            <person name="Morinaga M."/>
            <person name="Sasaki M."/>
            <person name="Togashi T."/>
            <person name="Oyama M."/>
            <person name="Hata H."/>
            <person name="Watanabe M."/>
            <person name="Komatsu T."/>
            <person name="Mizushima-Sugano J."/>
            <person name="Satoh T."/>
            <person name="Shirai Y."/>
            <person name="Takahashi Y."/>
            <person name="Nakagawa K."/>
            <person name="Okumura K."/>
            <person name="Nagase T."/>
            <person name="Nomura N."/>
            <person name="Kikuchi H."/>
            <person name="Masuho Y."/>
            <person name="Yamashita R."/>
            <person name="Nakai K."/>
            <person name="Yada T."/>
            <person name="Nakamura Y."/>
            <person name="Ohara O."/>
            <person name="Isogai T."/>
            <person name="Sugano S."/>
        </authorList>
    </citation>
    <scope>NUCLEOTIDE SEQUENCE [LARGE SCALE MRNA]</scope>
    <source>
        <tissue>Testis</tissue>
    </source>
</reference>
<reference key="4">
    <citation type="journal article" date="2004" name="Nature">
        <title>The sequence and analysis of duplication-rich human chromosome 16.</title>
        <authorList>
            <person name="Martin J."/>
            <person name="Han C."/>
            <person name="Gordon L.A."/>
            <person name="Terry A."/>
            <person name="Prabhakar S."/>
            <person name="She X."/>
            <person name="Xie G."/>
            <person name="Hellsten U."/>
            <person name="Chan Y.M."/>
            <person name="Altherr M."/>
            <person name="Couronne O."/>
            <person name="Aerts A."/>
            <person name="Bajorek E."/>
            <person name="Black S."/>
            <person name="Blumer H."/>
            <person name="Branscomb E."/>
            <person name="Brown N.C."/>
            <person name="Bruno W.J."/>
            <person name="Buckingham J.M."/>
            <person name="Callen D.F."/>
            <person name="Campbell C.S."/>
            <person name="Campbell M.L."/>
            <person name="Campbell E.W."/>
            <person name="Caoile C."/>
            <person name="Challacombe J.F."/>
            <person name="Chasteen L.A."/>
            <person name="Chertkov O."/>
            <person name="Chi H.C."/>
            <person name="Christensen M."/>
            <person name="Clark L.M."/>
            <person name="Cohn J.D."/>
            <person name="Denys M."/>
            <person name="Detter J.C."/>
            <person name="Dickson M."/>
            <person name="Dimitrijevic-Bussod M."/>
            <person name="Escobar J."/>
            <person name="Fawcett J.J."/>
            <person name="Flowers D."/>
            <person name="Fotopulos D."/>
            <person name="Glavina T."/>
            <person name="Gomez M."/>
            <person name="Gonzales E."/>
            <person name="Goodstein D."/>
            <person name="Goodwin L.A."/>
            <person name="Grady D.L."/>
            <person name="Grigoriev I."/>
            <person name="Groza M."/>
            <person name="Hammon N."/>
            <person name="Hawkins T."/>
            <person name="Haydu L."/>
            <person name="Hildebrand C.E."/>
            <person name="Huang W."/>
            <person name="Israni S."/>
            <person name="Jett J."/>
            <person name="Jewett P.B."/>
            <person name="Kadner K."/>
            <person name="Kimball H."/>
            <person name="Kobayashi A."/>
            <person name="Krawczyk M.-C."/>
            <person name="Leyba T."/>
            <person name="Longmire J.L."/>
            <person name="Lopez F."/>
            <person name="Lou Y."/>
            <person name="Lowry S."/>
            <person name="Ludeman T."/>
            <person name="Manohar C.F."/>
            <person name="Mark G.A."/>
            <person name="McMurray K.L."/>
            <person name="Meincke L.J."/>
            <person name="Morgan J."/>
            <person name="Moyzis R.K."/>
            <person name="Mundt M.O."/>
            <person name="Munk A.C."/>
            <person name="Nandkeshwar R.D."/>
            <person name="Pitluck S."/>
            <person name="Pollard M."/>
            <person name="Predki P."/>
            <person name="Parson-Quintana B."/>
            <person name="Ramirez L."/>
            <person name="Rash S."/>
            <person name="Retterer J."/>
            <person name="Ricke D.O."/>
            <person name="Robinson D.L."/>
            <person name="Rodriguez A."/>
            <person name="Salamov A."/>
            <person name="Saunders E.H."/>
            <person name="Scott D."/>
            <person name="Shough T."/>
            <person name="Stallings R.L."/>
            <person name="Stalvey M."/>
            <person name="Sutherland R.D."/>
            <person name="Tapia R."/>
            <person name="Tesmer J.G."/>
            <person name="Thayer N."/>
            <person name="Thompson L.S."/>
            <person name="Tice H."/>
            <person name="Torney D.C."/>
            <person name="Tran-Gyamfi M."/>
            <person name="Tsai M."/>
            <person name="Ulanovsky L.E."/>
            <person name="Ustaszewska A."/>
            <person name="Vo N."/>
            <person name="White P.S."/>
            <person name="Williams A.L."/>
            <person name="Wills P.L."/>
            <person name="Wu J.-R."/>
            <person name="Wu K."/>
            <person name="Yang J."/>
            <person name="DeJong P."/>
            <person name="Bruce D."/>
            <person name="Doggett N.A."/>
            <person name="Deaven L."/>
            <person name="Schmutz J."/>
            <person name="Grimwood J."/>
            <person name="Richardson P."/>
            <person name="Rokhsar D.S."/>
            <person name="Eichler E.E."/>
            <person name="Gilna P."/>
            <person name="Lucas S.M."/>
            <person name="Myers R.M."/>
            <person name="Rubin E.M."/>
            <person name="Pennacchio L.A."/>
        </authorList>
    </citation>
    <scope>NUCLEOTIDE SEQUENCE [LARGE SCALE GENOMIC DNA]</scope>
</reference>
<reference key="5">
    <citation type="submission" date="2005-07" db="EMBL/GenBank/DDBJ databases">
        <authorList>
            <person name="Mural R.J."/>
            <person name="Istrail S."/>
            <person name="Sutton G.G."/>
            <person name="Florea L."/>
            <person name="Halpern A.L."/>
            <person name="Mobarry C.M."/>
            <person name="Lippert R."/>
            <person name="Walenz B."/>
            <person name="Shatkay H."/>
            <person name="Dew I."/>
            <person name="Miller J.R."/>
            <person name="Flanigan M.J."/>
            <person name="Edwards N.J."/>
            <person name="Bolanos R."/>
            <person name="Fasulo D."/>
            <person name="Halldorsson B.V."/>
            <person name="Hannenhalli S."/>
            <person name="Turner R."/>
            <person name="Yooseph S."/>
            <person name="Lu F."/>
            <person name="Nusskern D.R."/>
            <person name="Shue B.C."/>
            <person name="Zheng X.H."/>
            <person name="Zhong F."/>
            <person name="Delcher A.L."/>
            <person name="Huson D.H."/>
            <person name="Kravitz S.A."/>
            <person name="Mouchard L."/>
            <person name="Reinert K."/>
            <person name="Remington K.A."/>
            <person name="Clark A.G."/>
            <person name="Waterman M.S."/>
            <person name="Eichler E.E."/>
            <person name="Adams M.D."/>
            <person name="Hunkapiller M.W."/>
            <person name="Myers E.W."/>
            <person name="Venter J.C."/>
        </authorList>
    </citation>
    <scope>NUCLEOTIDE SEQUENCE [LARGE SCALE GENOMIC DNA]</scope>
</reference>
<reference key="6">
    <citation type="journal article" date="2004" name="Genome Res.">
        <title>The status, quality, and expansion of the NIH full-length cDNA project: the Mammalian Gene Collection (MGC).</title>
        <authorList>
            <consortium name="The MGC Project Team"/>
        </authorList>
    </citation>
    <scope>NUCLEOTIDE SEQUENCE [LARGE SCALE MRNA]</scope>
    <source>
        <tissue>Testis</tissue>
    </source>
</reference>
<reference key="7">
    <citation type="journal article" date="2020" name="J. Struct. Biol.">
        <title>Structure of human DPEP3 in complex with the SC-003 antibody Fab fragment reveals basis for lack of dipeptidase activity.</title>
        <authorList>
            <person name="Hayashi K."/>
            <person name="Longenecker K.L."/>
            <person name="Koenig P."/>
            <person name="Prashar A."/>
            <person name="Hampl J."/>
            <person name="Stoll V."/>
            <person name="Vivona S."/>
        </authorList>
    </citation>
    <scope>X-RAY CRYSTALLOGRAPHY (1.82 ANGSTROMS)</scope>
    <scope>ABSENCE OF DIPEPTIDASE ACTIVITY</scope>
    <scope>SUBUNIT</scope>
    <scope>MUTAGENESIS OF GLU-196</scope>
</reference>
<protein>
    <recommendedName>
        <fullName>Dipeptidase 3</fullName>
    </recommendedName>
</protein>
<proteinExistence type="evidence at protein level"/>
<dbReference type="EMBL" id="AJ291679">
    <property type="protein sequence ID" value="CAC15385.1"/>
    <property type="status" value="ALT_INIT"/>
    <property type="molecule type" value="mRNA"/>
</dbReference>
<dbReference type="EMBL" id="AY358390">
    <property type="protein sequence ID" value="AAQ88756.1"/>
    <property type="molecule type" value="mRNA"/>
</dbReference>
<dbReference type="EMBL" id="AK057401">
    <property type="protein sequence ID" value="BAG51910.1"/>
    <property type="status" value="ALT_INIT"/>
    <property type="molecule type" value="mRNA"/>
</dbReference>
<dbReference type="EMBL" id="AC040162">
    <property type="status" value="NOT_ANNOTATED_CDS"/>
    <property type="molecule type" value="Genomic_DNA"/>
</dbReference>
<dbReference type="EMBL" id="CH471092">
    <property type="protein sequence ID" value="EAW83198.1"/>
    <property type="status" value="ALT_SEQ"/>
    <property type="molecule type" value="Genomic_DNA"/>
</dbReference>
<dbReference type="EMBL" id="BC057789">
    <property type="protein sequence ID" value="AAH57789.1"/>
    <property type="status" value="ALT_INIT"/>
    <property type="molecule type" value="mRNA"/>
</dbReference>
<dbReference type="CCDS" id="CCDS10856.2"/>
<dbReference type="RefSeq" id="NP_001123230.1">
    <property type="nucleotide sequence ID" value="NM_001129758.1"/>
</dbReference>
<dbReference type="RefSeq" id="NP_001357127.1">
    <property type="nucleotide sequence ID" value="NM_001370198.1"/>
</dbReference>
<dbReference type="RefSeq" id="NP_071752.3">
    <property type="nucleotide sequence ID" value="NM_022357.3"/>
</dbReference>
<dbReference type="PDB" id="6VGO">
    <property type="method" value="X-ray"/>
    <property type="resolution" value="1.82 A"/>
    <property type="chains" value="A=1-488"/>
</dbReference>
<dbReference type="PDB" id="6VGR">
    <property type="method" value="X-ray"/>
    <property type="resolution" value="2.84 A"/>
    <property type="chains" value="A/B=1-488"/>
</dbReference>
<dbReference type="PDBsum" id="6VGO"/>
<dbReference type="PDBsum" id="6VGR"/>
<dbReference type="SMR" id="Q9H4B8"/>
<dbReference type="BioGRID" id="122099">
    <property type="interactions" value="17"/>
</dbReference>
<dbReference type="FunCoup" id="Q9H4B8">
    <property type="interactions" value="89"/>
</dbReference>
<dbReference type="IntAct" id="Q9H4B8">
    <property type="interactions" value="5"/>
</dbReference>
<dbReference type="STRING" id="9606.ENSP00000500237"/>
<dbReference type="MEROPS" id="M19.004"/>
<dbReference type="GlyCosmos" id="Q9H4B8">
    <property type="glycosylation" value="1 site, No reported glycans"/>
</dbReference>
<dbReference type="GlyGen" id="Q9H4B8">
    <property type="glycosylation" value="1 site"/>
</dbReference>
<dbReference type="iPTMnet" id="Q9H4B8"/>
<dbReference type="PhosphoSitePlus" id="Q9H4B8"/>
<dbReference type="BioMuta" id="DPEP3"/>
<dbReference type="DMDM" id="91206587"/>
<dbReference type="jPOST" id="Q9H4B8"/>
<dbReference type="MassIVE" id="Q9H4B8"/>
<dbReference type="PaxDb" id="9606-ENSP00000268793"/>
<dbReference type="PeptideAtlas" id="Q9H4B8"/>
<dbReference type="ProteomicsDB" id="80820"/>
<dbReference type="ABCD" id="Q9H4B8">
    <property type="antibodies" value="44 sequenced antibodies"/>
</dbReference>
<dbReference type="Antibodypedia" id="54982">
    <property type="antibodies" value="106 antibodies from 18 providers"/>
</dbReference>
<dbReference type="DNASU" id="64180"/>
<dbReference type="Ensembl" id="ENST00000268793.6">
    <property type="protein sequence ID" value="ENSP00000268793.5"/>
    <property type="gene ID" value="ENSG00000141096.6"/>
</dbReference>
<dbReference type="GeneID" id="64180"/>
<dbReference type="KEGG" id="hsa:64180"/>
<dbReference type="MANE-Select" id="ENST00000268793.6">
    <property type="protein sequence ID" value="ENSP00000268793.5"/>
    <property type="RefSeq nucleotide sequence ID" value="NM_001370198.1"/>
    <property type="RefSeq protein sequence ID" value="NP_001357127.1"/>
</dbReference>
<dbReference type="UCSC" id="uc002evc.5">
    <property type="organism name" value="human"/>
</dbReference>
<dbReference type="AGR" id="HGNC:23029"/>
<dbReference type="CTD" id="64180"/>
<dbReference type="DisGeNET" id="64180"/>
<dbReference type="GeneCards" id="DPEP3"/>
<dbReference type="HGNC" id="HGNC:23029">
    <property type="gene designation" value="DPEP3"/>
</dbReference>
<dbReference type="HPA" id="ENSG00000141096">
    <property type="expression patterns" value="Tissue enriched (testis)"/>
</dbReference>
<dbReference type="MIM" id="609926">
    <property type="type" value="gene"/>
</dbReference>
<dbReference type="neXtProt" id="NX_Q9H4B8"/>
<dbReference type="OpenTargets" id="ENSG00000141096"/>
<dbReference type="PharmGKB" id="PA134978786"/>
<dbReference type="VEuPathDB" id="HostDB:ENSG00000141096"/>
<dbReference type="eggNOG" id="KOG4127">
    <property type="taxonomic scope" value="Eukaryota"/>
</dbReference>
<dbReference type="GeneTree" id="ENSGT00940000162331"/>
<dbReference type="HOGENOM" id="CLU_031404_4_1_1"/>
<dbReference type="InParanoid" id="Q9H4B8"/>
<dbReference type="OMA" id="SRHNVFG"/>
<dbReference type="OrthoDB" id="445695at2759"/>
<dbReference type="PAN-GO" id="Q9H4B8">
    <property type="GO annotations" value="0 GO annotations based on evolutionary models"/>
</dbReference>
<dbReference type="PhylomeDB" id="Q9H4B8"/>
<dbReference type="TreeFam" id="TF324523"/>
<dbReference type="PathwayCommons" id="Q9H4B8"/>
<dbReference type="SignaLink" id="Q9H4B8"/>
<dbReference type="BioGRID-ORCS" id="64180">
    <property type="hits" value="14 hits in 1148 CRISPR screens"/>
</dbReference>
<dbReference type="GeneWiki" id="DPEP3"/>
<dbReference type="GenomeRNAi" id="64180"/>
<dbReference type="Pharos" id="Q9H4B8">
    <property type="development level" value="Tbio"/>
</dbReference>
<dbReference type="PRO" id="PR:Q9H4B8"/>
<dbReference type="Proteomes" id="UP000005640">
    <property type="component" value="Chromosome 16"/>
</dbReference>
<dbReference type="RNAct" id="Q9H4B8">
    <property type="molecule type" value="protein"/>
</dbReference>
<dbReference type="Bgee" id="ENSG00000141096">
    <property type="expression patterns" value="Expressed in right testis and 90 other cell types or tissues"/>
</dbReference>
<dbReference type="ExpressionAtlas" id="Q9H4B8">
    <property type="expression patterns" value="baseline and differential"/>
</dbReference>
<dbReference type="GO" id="GO:0001669">
    <property type="term" value="C:acrosomal vesicle"/>
    <property type="evidence" value="ECO:0000250"/>
    <property type="project" value="UniProtKB"/>
</dbReference>
<dbReference type="GO" id="GO:0016020">
    <property type="term" value="C:membrane"/>
    <property type="evidence" value="ECO:0000250"/>
    <property type="project" value="UniProtKB"/>
</dbReference>
<dbReference type="GO" id="GO:0005886">
    <property type="term" value="C:plasma membrane"/>
    <property type="evidence" value="ECO:0000250"/>
    <property type="project" value="UniProtKB"/>
</dbReference>
<dbReference type="GO" id="GO:0098552">
    <property type="term" value="C:side of membrane"/>
    <property type="evidence" value="ECO:0007669"/>
    <property type="project" value="UniProtKB-KW"/>
</dbReference>
<dbReference type="GO" id="GO:0016805">
    <property type="term" value="F:dipeptidase activity"/>
    <property type="evidence" value="ECO:0000250"/>
    <property type="project" value="UniProtKB"/>
</dbReference>
<dbReference type="GO" id="GO:0006508">
    <property type="term" value="P:proteolysis"/>
    <property type="evidence" value="ECO:0007669"/>
    <property type="project" value="Ensembl"/>
</dbReference>
<dbReference type="CDD" id="cd01301">
    <property type="entry name" value="rDP_like"/>
    <property type="match status" value="1"/>
</dbReference>
<dbReference type="FunFam" id="3.20.20.140:FF:000030">
    <property type="entry name" value="Dipeptidase"/>
    <property type="match status" value="1"/>
</dbReference>
<dbReference type="Gene3D" id="3.20.20.140">
    <property type="entry name" value="Metal-dependent hydrolases"/>
    <property type="match status" value="1"/>
</dbReference>
<dbReference type="InterPro" id="IPR000180">
    <property type="entry name" value="Dipep_AS"/>
</dbReference>
<dbReference type="InterPro" id="IPR032466">
    <property type="entry name" value="Metal_Hydrolase"/>
</dbReference>
<dbReference type="InterPro" id="IPR008257">
    <property type="entry name" value="Pept_M19"/>
</dbReference>
<dbReference type="PANTHER" id="PTHR10443:SF14">
    <property type="entry name" value="DIPEPTIDASE 3"/>
    <property type="match status" value="1"/>
</dbReference>
<dbReference type="PANTHER" id="PTHR10443">
    <property type="entry name" value="MICROSOMAL DIPEPTIDASE"/>
    <property type="match status" value="1"/>
</dbReference>
<dbReference type="Pfam" id="PF01244">
    <property type="entry name" value="Peptidase_M19"/>
    <property type="match status" value="1"/>
</dbReference>
<dbReference type="SUPFAM" id="SSF51556">
    <property type="entry name" value="Metallo-dependent hydrolases"/>
    <property type="match status" value="1"/>
</dbReference>
<dbReference type="PROSITE" id="PS00869">
    <property type="entry name" value="RENAL_DIPEPTIDASE_1"/>
    <property type="match status" value="1"/>
</dbReference>
<dbReference type="PROSITE" id="PS51365">
    <property type="entry name" value="RENAL_DIPEPTIDASE_2"/>
    <property type="match status" value="1"/>
</dbReference>
<feature type="signal peptide" evidence="3">
    <location>
        <begin position="1"/>
        <end position="35"/>
    </location>
</feature>
<feature type="chain" id="PRO_0000231609" description="Dipeptidase 3">
    <location>
        <begin position="36"/>
        <end position="463"/>
    </location>
</feature>
<feature type="propeptide" id="PRO_0000231610" description="Removed in mature form" evidence="1">
    <location>
        <begin position="464"/>
        <end position="488"/>
    </location>
</feature>
<feature type="lipid moiety-binding region" description="GPI-anchor amidated serine" evidence="3">
    <location>
        <position position="463"/>
    </location>
</feature>
<feature type="glycosylation site" description="N-linked (GlcNAc...) asparagine" evidence="3">
    <location>
        <position position="334"/>
    </location>
</feature>
<feature type="disulfide bond" evidence="4">
    <location>
        <begin position="146"/>
        <end position="225"/>
    </location>
</feature>
<feature type="disulfide bond" evidence="4">
    <location>
        <begin position="297"/>
        <end position="329"/>
    </location>
</feature>
<feature type="disulfide bond" description="Interchain" evidence="4">
    <location>
        <position position="434"/>
    </location>
</feature>
<feature type="mutagenesis site" description="Loss of zinc binding." evidence="5">
    <original>E</original>
    <variation>A</variation>
    <location>
        <position position="196"/>
    </location>
</feature>
<feature type="sequence conflict" description="In Ref. 6; AAH57789." evidence="6" ref="6">
    <location>
        <position position="48"/>
    </location>
</feature>
<feature type="sequence conflict" description="In Ref. 2; AAQ88756." evidence="6" ref="2">
    <location>
        <position position="312"/>
    </location>
</feature>
<feature type="helix" evidence="7">
    <location>
        <begin position="79"/>
        <end position="90"/>
    </location>
</feature>
<feature type="strand" evidence="7">
    <location>
        <begin position="93"/>
        <end position="98"/>
    </location>
</feature>
<feature type="helix" evidence="7">
    <location>
        <begin position="100"/>
        <end position="108"/>
    </location>
</feature>
<feature type="helix" evidence="7">
    <location>
        <begin position="112"/>
        <end position="114"/>
    </location>
</feature>
<feature type="strand" evidence="7">
    <location>
        <begin position="117"/>
        <end position="119"/>
    </location>
</feature>
<feature type="strand" evidence="7">
    <location>
        <begin position="122"/>
        <end position="124"/>
    </location>
</feature>
<feature type="helix" evidence="7">
    <location>
        <begin position="127"/>
        <end position="132"/>
    </location>
</feature>
<feature type="strand" evidence="7">
    <location>
        <begin position="135"/>
        <end position="143"/>
    </location>
</feature>
<feature type="helix" evidence="7">
    <location>
        <begin position="146"/>
        <end position="148"/>
    </location>
</feature>
<feature type="turn" evidence="7">
    <location>
        <begin position="149"/>
        <end position="152"/>
    </location>
</feature>
<feature type="helix" evidence="7">
    <location>
        <begin position="153"/>
        <end position="170"/>
    </location>
</feature>
<feature type="strand" evidence="7">
    <location>
        <begin position="174"/>
        <end position="176"/>
    </location>
</feature>
<feature type="helix" evidence="7">
    <location>
        <begin position="180"/>
        <end position="185"/>
    </location>
</feature>
<feature type="strand" evidence="7">
    <location>
        <begin position="187"/>
        <end position="196"/>
    </location>
</feature>
<feature type="helix" evidence="7">
    <location>
        <begin position="198"/>
        <end position="201"/>
    </location>
</feature>
<feature type="helix" evidence="7">
    <location>
        <begin position="205"/>
        <end position="213"/>
    </location>
</feature>
<feature type="strand" evidence="7">
    <location>
        <begin position="216"/>
        <end position="221"/>
    </location>
</feature>
<feature type="strand" evidence="7">
    <location>
        <begin position="223"/>
        <end position="225"/>
    </location>
</feature>
<feature type="helix" evidence="7">
    <location>
        <begin position="235"/>
        <end position="237"/>
    </location>
</feature>
<feature type="strand" evidence="7">
    <location>
        <begin position="238"/>
        <end position="241"/>
    </location>
</feature>
<feature type="helix" evidence="7">
    <location>
        <begin position="249"/>
        <end position="261"/>
    </location>
</feature>
<feature type="strand" evidence="7">
    <location>
        <begin position="264"/>
        <end position="266"/>
    </location>
</feature>
<feature type="helix" evidence="7">
    <location>
        <begin position="272"/>
        <end position="281"/>
    </location>
</feature>
<feature type="strand" evidence="7">
    <location>
        <begin position="287"/>
        <end position="291"/>
    </location>
</feature>
<feature type="turn" evidence="7">
    <location>
        <begin position="294"/>
        <end position="296"/>
    </location>
</feature>
<feature type="helix" evidence="7">
    <location>
        <begin position="305"/>
        <end position="314"/>
    </location>
</feature>
<feature type="strand" evidence="7">
    <location>
        <begin position="317"/>
        <end position="320"/>
    </location>
</feature>
<feature type="turn" evidence="7">
    <location>
        <begin position="324"/>
        <end position="329"/>
    </location>
</feature>
<feature type="helix" evidence="7">
    <location>
        <begin position="335"/>
        <end position="348"/>
    </location>
</feature>
<feature type="helix" evidence="7">
    <location>
        <begin position="351"/>
        <end position="353"/>
    </location>
</feature>
<feature type="strand" evidence="7">
    <location>
        <begin position="354"/>
        <end position="356"/>
    </location>
</feature>
<feature type="strand" evidence="7">
    <location>
        <begin position="362"/>
        <end position="364"/>
    </location>
</feature>
<feature type="helix" evidence="7">
    <location>
        <begin position="373"/>
        <end position="375"/>
    </location>
</feature>
<feature type="helix" evidence="7">
    <location>
        <begin position="376"/>
        <end position="385"/>
    </location>
</feature>
<feature type="helix" evidence="7">
    <location>
        <begin position="390"/>
        <end position="397"/>
    </location>
</feature>
<feature type="helix" evidence="7">
    <location>
        <begin position="399"/>
        <end position="414"/>
    </location>
</feature>
<feature type="turn" evidence="7">
    <location>
        <begin position="415"/>
        <end position="417"/>
    </location>
</feature>
<evidence type="ECO:0000250" key="1">
    <source>
        <dbReference type="UniProtKB" id="P16444"/>
    </source>
</evidence>
<evidence type="ECO:0000250" key="2">
    <source>
        <dbReference type="UniProtKB" id="Q9DA79"/>
    </source>
</evidence>
<evidence type="ECO:0000255" key="3"/>
<evidence type="ECO:0000255" key="4">
    <source>
        <dbReference type="PROSITE-ProRule" id="PRU10073"/>
    </source>
</evidence>
<evidence type="ECO:0000269" key="5">
    <source>
    </source>
</evidence>
<evidence type="ECO:0000305" key="6"/>
<evidence type="ECO:0007829" key="7">
    <source>
        <dbReference type="PDB" id="6VGO"/>
    </source>
</evidence>
<sequence length="488" mass="53687">MQPTGREGSRALSRRYLRRLLLLLLLLLLRQPVTRAETTPGAPRALSTLGSPSLFTTPGVPSALTTPGLTTPGTPKTLDLRGRAQALMRSFPLVDGHNDLPQVLRQRYKNVLQDVNLRNFSHGQTSLDRLRDGLVGAQFWSASVSCQSQDQTAVRLALEQIDLIHRMCASYSELELVTSAEGLNSSQKLACLIGVEGGHSLDSSLSVLRSFYVLGVRYLTLTFTCSTPWAESSTKFRHHMYTNVSGLTSFGEKVVEELNRLGMMIDLSYASDTLIRRVLEVSQAPVIFSHSAARAVCDNLLNVPDDILQLLKKNGGIVMVTLSMGVLQCNLLANVSTVADHFDHIRAVIGSEFIGIGGNYDGTGRFPQGLEDVSTYPVLIEELLSRSWSEEELQGVLRGNLLRVFRQVEKVREESRAQSPVEAEFPYGQLSTSCHSHLVPQNGHQATHLEVTKQPTNRVPWRSSNASPYLVPGLVAAATIPTFTQWLC</sequence>
<name>DPEP3_HUMAN</name>